<accession>B5R6I4</accession>
<comment type="catalytic activity">
    <reaction evidence="1">
        <text>D-arabinose 5-phosphate + phosphoenolpyruvate + H2O = 3-deoxy-alpha-D-manno-2-octulosonate-8-phosphate + phosphate</text>
        <dbReference type="Rhea" id="RHEA:14053"/>
        <dbReference type="ChEBI" id="CHEBI:15377"/>
        <dbReference type="ChEBI" id="CHEBI:43474"/>
        <dbReference type="ChEBI" id="CHEBI:57693"/>
        <dbReference type="ChEBI" id="CHEBI:58702"/>
        <dbReference type="ChEBI" id="CHEBI:85985"/>
        <dbReference type="EC" id="2.5.1.55"/>
    </reaction>
</comment>
<comment type="pathway">
    <text evidence="1">Carbohydrate biosynthesis; 3-deoxy-D-manno-octulosonate biosynthesis; 3-deoxy-D-manno-octulosonate from D-ribulose 5-phosphate: step 2/3.</text>
</comment>
<comment type="pathway">
    <text evidence="1">Bacterial outer membrane biogenesis; lipopolysaccharide biosynthesis.</text>
</comment>
<comment type="subcellular location">
    <subcellularLocation>
        <location evidence="1">Cytoplasm</location>
    </subcellularLocation>
</comment>
<comment type="similarity">
    <text evidence="1">Belongs to the KdsA family.</text>
</comment>
<organism>
    <name type="scientific">Salmonella gallinarum (strain 287/91 / NCTC 13346)</name>
    <dbReference type="NCBI Taxonomy" id="550538"/>
    <lineage>
        <taxon>Bacteria</taxon>
        <taxon>Pseudomonadati</taxon>
        <taxon>Pseudomonadota</taxon>
        <taxon>Gammaproteobacteria</taxon>
        <taxon>Enterobacterales</taxon>
        <taxon>Enterobacteriaceae</taxon>
        <taxon>Salmonella</taxon>
    </lineage>
</organism>
<gene>
    <name evidence="1" type="primary">kdsA</name>
    <name type="ordered locus">SG1345</name>
</gene>
<keyword id="KW-0963">Cytoplasm</keyword>
<keyword id="KW-0448">Lipopolysaccharide biosynthesis</keyword>
<keyword id="KW-0808">Transferase</keyword>
<proteinExistence type="inferred from homology"/>
<evidence type="ECO:0000255" key="1">
    <source>
        <dbReference type="HAMAP-Rule" id="MF_00056"/>
    </source>
</evidence>
<dbReference type="EC" id="2.5.1.55" evidence="1"/>
<dbReference type="EMBL" id="AM933173">
    <property type="protein sequence ID" value="CAR37221.1"/>
    <property type="molecule type" value="Genomic_DNA"/>
</dbReference>
<dbReference type="RefSeq" id="WP_000811046.1">
    <property type="nucleotide sequence ID" value="NC_011274.1"/>
</dbReference>
<dbReference type="SMR" id="B5R6I4"/>
<dbReference type="KEGG" id="seg:SG1345"/>
<dbReference type="HOGENOM" id="CLU_036666_0_0_6"/>
<dbReference type="UniPathway" id="UPA00030"/>
<dbReference type="UniPathway" id="UPA00357">
    <property type="reaction ID" value="UER00474"/>
</dbReference>
<dbReference type="Proteomes" id="UP000008321">
    <property type="component" value="Chromosome"/>
</dbReference>
<dbReference type="GO" id="GO:0005737">
    <property type="term" value="C:cytoplasm"/>
    <property type="evidence" value="ECO:0007669"/>
    <property type="project" value="UniProtKB-SubCell"/>
</dbReference>
<dbReference type="GO" id="GO:0008676">
    <property type="term" value="F:3-deoxy-8-phosphooctulonate synthase activity"/>
    <property type="evidence" value="ECO:0007669"/>
    <property type="project" value="UniProtKB-UniRule"/>
</dbReference>
<dbReference type="GO" id="GO:0019294">
    <property type="term" value="P:keto-3-deoxy-D-manno-octulosonic acid biosynthetic process"/>
    <property type="evidence" value="ECO:0007669"/>
    <property type="project" value="UniProtKB-UniRule"/>
</dbReference>
<dbReference type="FunFam" id="3.20.20.70:FF:000058">
    <property type="entry name" value="2-dehydro-3-deoxyphosphooctonate aldolase"/>
    <property type="match status" value="1"/>
</dbReference>
<dbReference type="Gene3D" id="3.20.20.70">
    <property type="entry name" value="Aldolase class I"/>
    <property type="match status" value="1"/>
</dbReference>
<dbReference type="HAMAP" id="MF_00056">
    <property type="entry name" value="KDO8P_synth"/>
    <property type="match status" value="1"/>
</dbReference>
<dbReference type="InterPro" id="IPR013785">
    <property type="entry name" value="Aldolase_TIM"/>
</dbReference>
<dbReference type="InterPro" id="IPR006218">
    <property type="entry name" value="DAHP1/KDSA"/>
</dbReference>
<dbReference type="InterPro" id="IPR006269">
    <property type="entry name" value="KDO8P_synthase"/>
</dbReference>
<dbReference type="NCBIfam" id="TIGR01362">
    <property type="entry name" value="KDO8P_synth"/>
    <property type="match status" value="1"/>
</dbReference>
<dbReference type="NCBIfam" id="NF003543">
    <property type="entry name" value="PRK05198.1"/>
    <property type="match status" value="1"/>
</dbReference>
<dbReference type="NCBIfam" id="NF009109">
    <property type="entry name" value="PRK12457.1"/>
    <property type="match status" value="1"/>
</dbReference>
<dbReference type="PANTHER" id="PTHR21057">
    <property type="entry name" value="PHOSPHO-2-DEHYDRO-3-DEOXYHEPTONATE ALDOLASE"/>
    <property type="match status" value="1"/>
</dbReference>
<dbReference type="Pfam" id="PF00793">
    <property type="entry name" value="DAHP_synth_1"/>
    <property type="match status" value="1"/>
</dbReference>
<dbReference type="SUPFAM" id="SSF51569">
    <property type="entry name" value="Aldolase"/>
    <property type="match status" value="1"/>
</dbReference>
<sequence>MKQKVVNIGDIKVANDLPFVLFGGMNVLESRDLAMRICEHYVTVTQKLGIPYVFKASFDKANRSSIHSYRGPGLEEGMKIFQELKQTFGVKVITDVHEASQAQPVADVVDVIQLPAFLARQTDLVEAMAKTGAVINVKKPQFVSPGQMGNIVDKFHEGGNDKVILCDRGANFGYDNLVVDMLGFSVMKKVSGNSPVIFDVTHALQCRDPFGAASGGRRGQVTELARAGMAVGLAGLFLESHPDPANAKCDGPSALPLAKLEQFLTQIKAIDDLVKSFDELDTEN</sequence>
<protein>
    <recommendedName>
        <fullName evidence="1">2-dehydro-3-deoxyphosphooctonate aldolase</fullName>
        <ecNumber evidence="1">2.5.1.55</ecNumber>
    </recommendedName>
    <alternativeName>
        <fullName evidence="1">3-deoxy-D-manno-octulosonic acid 8-phosphate synthase</fullName>
    </alternativeName>
    <alternativeName>
        <fullName evidence="1">KDO-8-phosphate synthase</fullName>
        <shortName evidence="1">KDO 8-P synthase</shortName>
        <shortName evidence="1">KDOPS</shortName>
    </alternativeName>
    <alternativeName>
        <fullName evidence="1">Phospho-2-dehydro-3-deoxyoctonate aldolase</fullName>
    </alternativeName>
</protein>
<name>KDSA_SALG2</name>
<reference key="1">
    <citation type="journal article" date="2008" name="Genome Res.">
        <title>Comparative genome analysis of Salmonella enteritidis PT4 and Salmonella gallinarum 287/91 provides insights into evolutionary and host adaptation pathways.</title>
        <authorList>
            <person name="Thomson N.R."/>
            <person name="Clayton D.J."/>
            <person name="Windhorst D."/>
            <person name="Vernikos G."/>
            <person name="Davidson S."/>
            <person name="Churcher C."/>
            <person name="Quail M.A."/>
            <person name="Stevens M."/>
            <person name="Jones M.A."/>
            <person name="Watson M."/>
            <person name="Barron A."/>
            <person name="Layton A."/>
            <person name="Pickard D."/>
            <person name="Kingsley R.A."/>
            <person name="Bignell A."/>
            <person name="Clark L."/>
            <person name="Harris B."/>
            <person name="Ormond D."/>
            <person name="Abdellah Z."/>
            <person name="Brooks K."/>
            <person name="Cherevach I."/>
            <person name="Chillingworth T."/>
            <person name="Woodward J."/>
            <person name="Norberczak H."/>
            <person name="Lord A."/>
            <person name="Arrowsmith C."/>
            <person name="Jagels K."/>
            <person name="Moule S."/>
            <person name="Mungall K."/>
            <person name="Saunders M."/>
            <person name="Whitehead S."/>
            <person name="Chabalgoity J.A."/>
            <person name="Maskell D."/>
            <person name="Humphreys T."/>
            <person name="Roberts M."/>
            <person name="Barrow P.A."/>
            <person name="Dougan G."/>
            <person name="Parkhill J."/>
        </authorList>
    </citation>
    <scope>NUCLEOTIDE SEQUENCE [LARGE SCALE GENOMIC DNA]</scope>
    <source>
        <strain>287/91 / NCTC 13346</strain>
    </source>
</reference>
<feature type="chain" id="PRO_1000091832" description="2-dehydro-3-deoxyphosphooctonate aldolase">
    <location>
        <begin position="1"/>
        <end position="284"/>
    </location>
</feature>